<keyword id="KW-0021">Allosteric enzyme</keyword>
<keyword id="KW-0963">Cytoplasm</keyword>
<keyword id="KW-0378">Hydrolase</keyword>
<keyword id="KW-0479">Metal-binding</keyword>
<keyword id="KW-0645">Protease</keyword>
<keyword id="KW-1185">Reference proteome</keyword>
<keyword id="KW-0915">Sodium</keyword>
<keyword id="KW-0888">Threonine protease</keyword>
<comment type="function">
    <text evidence="1">Protease subunit of a proteasome-like degradation complex believed to be a general protein degrading machinery.</text>
</comment>
<comment type="catalytic activity">
    <reaction evidence="1">
        <text>ATP-dependent cleavage of peptide bonds with broad specificity.</text>
        <dbReference type="EC" id="3.4.25.2"/>
    </reaction>
</comment>
<comment type="activity regulation">
    <text evidence="1">Allosterically activated by HslU binding.</text>
</comment>
<comment type="subunit">
    <text evidence="1">A double ring-shaped homohexamer of HslV is capped on each side by a ring-shaped HslU homohexamer. The assembly of the HslU/HslV complex is dependent on binding of ATP.</text>
</comment>
<comment type="subcellular location">
    <subcellularLocation>
        <location evidence="1">Cytoplasm</location>
    </subcellularLocation>
</comment>
<comment type="similarity">
    <text evidence="1">Belongs to the peptidase T1B family. HslV subfamily.</text>
</comment>
<feature type="chain" id="PRO_1000012642" description="ATP-dependent protease subunit HslV">
    <location>
        <begin position="1"/>
        <end position="184"/>
    </location>
</feature>
<feature type="active site" evidence="1">
    <location>
        <position position="12"/>
    </location>
</feature>
<feature type="binding site" evidence="1">
    <location>
        <position position="166"/>
    </location>
    <ligand>
        <name>Na(+)</name>
        <dbReference type="ChEBI" id="CHEBI:29101"/>
    </ligand>
</feature>
<feature type="binding site" evidence="1">
    <location>
        <position position="169"/>
    </location>
    <ligand>
        <name>Na(+)</name>
        <dbReference type="ChEBI" id="CHEBI:29101"/>
    </ligand>
</feature>
<feature type="binding site" evidence="1">
    <location>
        <position position="172"/>
    </location>
    <ligand>
        <name>Na(+)</name>
        <dbReference type="ChEBI" id="CHEBI:29101"/>
    </ligand>
</feature>
<accession>A6WX57</accession>
<organism>
    <name type="scientific">Brucella anthropi (strain ATCC 49188 / DSM 6882 / CCUG 24695 / JCM 21032 / LMG 3331 / NBRC 15819 / NCTC 12168 / Alc 37)</name>
    <name type="common">Ochrobactrum anthropi</name>
    <dbReference type="NCBI Taxonomy" id="439375"/>
    <lineage>
        <taxon>Bacteria</taxon>
        <taxon>Pseudomonadati</taxon>
        <taxon>Pseudomonadota</taxon>
        <taxon>Alphaproteobacteria</taxon>
        <taxon>Hyphomicrobiales</taxon>
        <taxon>Brucellaceae</taxon>
        <taxon>Brucella/Ochrobactrum group</taxon>
        <taxon>Brucella</taxon>
    </lineage>
</organism>
<gene>
    <name evidence="1" type="primary">hslV</name>
    <name type="ordered locus">Oant_0839</name>
</gene>
<name>HSLV_BRUA4</name>
<protein>
    <recommendedName>
        <fullName evidence="1">ATP-dependent protease subunit HslV</fullName>
        <ecNumber evidence="1">3.4.25.2</ecNumber>
    </recommendedName>
</protein>
<dbReference type="EC" id="3.4.25.2" evidence="1"/>
<dbReference type="EMBL" id="CP000758">
    <property type="protein sequence ID" value="ABS13561.1"/>
    <property type="molecule type" value="Genomic_DNA"/>
</dbReference>
<dbReference type="RefSeq" id="WP_010657667.1">
    <property type="nucleotide sequence ID" value="NC_009667.1"/>
</dbReference>
<dbReference type="SMR" id="A6WX57"/>
<dbReference type="STRING" id="439375.Oant_0839"/>
<dbReference type="MEROPS" id="T01.006"/>
<dbReference type="GeneID" id="61318715"/>
<dbReference type="KEGG" id="oan:Oant_0839"/>
<dbReference type="eggNOG" id="COG5405">
    <property type="taxonomic scope" value="Bacteria"/>
</dbReference>
<dbReference type="HOGENOM" id="CLU_093872_1_0_5"/>
<dbReference type="PhylomeDB" id="A6WX57"/>
<dbReference type="Proteomes" id="UP000002301">
    <property type="component" value="Chromosome 1"/>
</dbReference>
<dbReference type="GO" id="GO:0009376">
    <property type="term" value="C:HslUV protease complex"/>
    <property type="evidence" value="ECO:0007669"/>
    <property type="project" value="UniProtKB-UniRule"/>
</dbReference>
<dbReference type="GO" id="GO:0005839">
    <property type="term" value="C:proteasome core complex"/>
    <property type="evidence" value="ECO:0007669"/>
    <property type="project" value="InterPro"/>
</dbReference>
<dbReference type="GO" id="GO:0046872">
    <property type="term" value="F:metal ion binding"/>
    <property type="evidence" value="ECO:0007669"/>
    <property type="project" value="UniProtKB-KW"/>
</dbReference>
<dbReference type="GO" id="GO:0004298">
    <property type="term" value="F:threonine-type endopeptidase activity"/>
    <property type="evidence" value="ECO:0007669"/>
    <property type="project" value="UniProtKB-KW"/>
</dbReference>
<dbReference type="GO" id="GO:0051603">
    <property type="term" value="P:proteolysis involved in protein catabolic process"/>
    <property type="evidence" value="ECO:0007669"/>
    <property type="project" value="InterPro"/>
</dbReference>
<dbReference type="CDD" id="cd01913">
    <property type="entry name" value="protease_HslV"/>
    <property type="match status" value="1"/>
</dbReference>
<dbReference type="FunFam" id="3.60.20.10:FF:000002">
    <property type="entry name" value="ATP-dependent protease subunit HslV"/>
    <property type="match status" value="1"/>
</dbReference>
<dbReference type="Gene3D" id="3.60.20.10">
    <property type="entry name" value="Glutamine Phosphoribosylpyrophosphate, subunit 1, domain 1"/>
    <property type="match status" value="1"/>
</dbReference>
<dbReference type="HAMAP" id="MF_00248">
    <property type="entry name" value="HslV"/>
    <property type="match status" value="1"/>
</dbReference>
<dbReference type="InterPro" id="IPR022281">
    <property type="entry name" value="ATP-dep_Prtase_HsIV_su"/>
</dbReference>
<dbReference type="InterPro" id="IPR029055">
    <property type="entry name" value="Ntn_hydrolases_N"/>
</dbReference>
<dbReference type="InterPro" id="IPR001353">
    <property type="entry name" value="Proteasome_sua/b"/>
</dbReference>
<dbReference type="InterPro" id="IPR023333">
    <property type="entry name" value="Proteasome_suB-type"/>
</dbReference>
<dbReference type="NCBIfam" id="TIGR03692">
    <property type="entry name" value="ATP_dep_HslV"/>
    <property type="match status" value="1"/>
</dbReference>
<dbReference type="NCBIfam" id="NF003964">
    <property type="entry name" value="PRK05456.1"/>
    <property type="match status" value="1"/>
</dbReference>
<dbReference type="PANTHER" id="PTHR32194:SF7">
    <property type="entry name" value="ATP-DEPENDENT PROTEASE SUBUNIT HSLV"/>
    <property type="match status" value="1"/>
</dbReference>
<dbReference type="PANTHER" id="PTHR32194">
    <property type="entry name" value="METALLOPROTEASE TLDD"/>
    <property type="match status" value="1"/>
</dbReference>
<dbReference type="Pfam" id="PF00227">
    <property type="entry name" value="Proteasome"/>
    <property type="match status" value="1"/>
</dbReference>
<dbReference type="PIRSF" id="PIRSF039093">
    <property type="entry name" value="HslV"/>
    <property type="match status" value="1"/>
</dbReference>
<dbReference type="SUPFAM" id="SSF56235">
    <property type="entry name" value="N-terminal nucleophile aminohydrolases (Ntn hydrolases)"/>
    <property type="match status" value="1"/>
</dbReference>
<dbReference type="PROSITE" id="PS51476">
    <property type="entry name" value="PROTEASOME_BETA_2"/>
    <property type="match status" value="1"/>
</dbReference>
<evidence type="ECO:0000255" key="1">
    <source>
        <dbReference type="HAMAP-Rule" id="MF_00248"/>
    </source>
</evidence>
<reference key="1">
    <citation type="journal article" date="2011" name="J. Bacteriol.">
        <title>Genome of Ochrobactrum anthropi ATCC 49188 T, a versatile opportunistic pathogen and symbiont of several eukaryotic hosts.</title>
        <authorList>
            <person name="Chain P.S."/>
            <person name="Lang D.M."/>
            <person name="Comerci D.J."/>
            <person name="Malfatti S.A."/>
            <person name="Vergez L.M."/>
            <person name="Shin M."/>
            <person name="Ugalde R.A."/>
            <person name="Garcia E."/>
            <person name="Tolmasky M.E."/>
        </authorList>
    </citation>
    <scope>NUCLEOTIDE SEQUENCE [LARGE SCALE GENOMIC DNA]</scope>
    <source>
        <strain>ATCC 49188 / DSM 6882 / CCUG 24695 / JCM 21032 / LMG 3331 / NBRC 15819 / NCTC 12168 / Alc 37</strain>
    </source>
</reference>
<sequence>MIEHHPTTIYGTTIVTVRKGNKVVIAGDGQVSLGNTVMKGNARKVRRIGKGNVIAGFAGATADAFTLLERLEAKLEQYPDQLMRASVELAKDWRTDRYLRKLEAMMLVADSKVTLALTGTGDVLEPEHGVMAIGSGGNYALAAARALVDTDKSAEEIARKAMDIAADICIYTNHNIIVESLDAE</sequence>
<proteinExistence type="inferred from homology"/>